<dbReference type="EMBL" id="AJ009673">
    <property type="protein sequence ID" value="CAB43196.1"/>
    <property type="molecule type" value="mRNA"/>
</dbReference>
<dbReference type="RefSeq" id="NP_001166211.1">
    <property type="nucleotide sequence ID" value="NM_001172740.1"/>
</dbReference>
<dbReference type="SMR" id="Q9WUR6"/>
<dbReference type="FunCoup" id="Q9WUR6">
    <property type="interactions" value="3112"/>
</dbReference>
<dbReference type="STRING" id="10141.ENSCPOP00000029751"/>
<dbReference type="Ensembl" id="ENSCPOT00000014394.3">
    <property type="protein sequence ID" value="ENSCPOP00000012841.2"/>
    <property type="gene ID" value="ENSCPOG00000014252.4"/>
</dbReference>
<dbReference type="GeneID" id="100379269"/>
<dbReference type="KEGG" id="cpoc:100379269"/>
<dbReference type="CTD" id="7157"/>
<dbReference type="VEuPathDB" id="HostDB:ENSCPOG00000014252"/>
<dbReference type="eggNOG" id="ENOG502QVY3">
    <property type="taxonomic scope" value="Eukaryota"/>
</dbReference>
<dbReference type="GeneTree" id="ENSGT00950000183153"/>
<dbReference type="HOGENOM" id="CLU_019621_0_0_1"/>
<dbReference type="InParanoid" id="Q9WUR6"/>
<dbReference type="OrthoDB" id="5915660at2759"/>
<dbReference type="TreeFam" id="TF106101"/>
<dbReference type="Proteomes" id="UP000005447">
    <property type="component" value="Unassembled WGS sequence"/>
</dbReference>
<dbReference type="Bgee" id="ENSCPOG00000014252">
    <property type="expression patterns" value="Expressed in zone of skin and 13 other cell types or tissues"/>
</dbReference>
<dbReference type="GO" id="GO:0005813">
    <property type="term" value="C:centrosome"/>
    <property type="evidence" value="ECO:0000250"/>
    <property type="project" value="UniProtKB"/>
</dbReference>
<dbReference type="GO" id="GO:0005737">
    <property type="term" value="C:cytoplasm"/>
    <property type="evidence" value="ECO:0000250"/>
    <property type="project" value="UniProtKB"/>
</dbReference>
<dbReference type="GO" id="GO:0005783">
    <property type="term" value="C:endoplasmic reticulum"/>
    <property type="evidence" value="ECO:0007669"/>
    <property type="project" value="UniProtKB-SubCell"/>
</dbReference>
<dbReference type="GO" id="GO:0005759">
    <property type="term" value="C:mitochondrial matrix"/>
    <property type="evidence" value="ECO:0007669"/>
    <property type="project" value="UniProtKB-SubCell"/>
</dbReference>
<dbReference type="GO" id="GO:0005739">
    <property type="term" value="C:mitochondrion"/>
    <property type="evidence" value="ECO:0000250"/>
    <property type="project" value="UniProtKB"/>
</dbReference>
<dbReference type="GO" id="GO:0005730">
    <property type="term" value="C:nucleolus"/>
    <property type="evidence" value="ECO:0000250"/>
    <property type="project" value="UniProtKB"/>
</dbReference>
<dbReference type="GO" id="GO:0005634">
    <property type="term" value="C:nucleus"/>
    <property type="evidence" value="ECO:0000250"/>
    <property type="project" value="UniProtKB"/>
</dbReference>
<dbReference type="GO" id="GO:0016605">
    <property type="term" value="C:PML body"/>
    <property type="evidence" value="ECO:0007669"/>
    <property type="project" value="UniProtKB-SubCell"/>
</dbReference>
<dbReference type="GO" id="GO:0036310">
    <property type="term" value="F:ATP-dependent DNA/DNA annealing activity"/>
    <property type="evidence" value="ECO:0000250"/>
    <property type="project" value="UniProtKB"/>
</dbReference>
<dbReference type="GO" id="GO:0005507">
    <property type="term" value="F:copper ion binding"/>
    <property type="evidence" value="ECO:0000250"/>
    <property type="project" value="UniProtKB"/>
</dbReference>
<dbReference type="GO" id="GO:0003677">
    <property type="term" value="F:DNA binding"/>
    <property type="evidence" value="ECO:0000250"/>
    <property type="project" value="UniProtKB"/>
</dbReference>
<dbReference type="GO" id="GO:0000981">
    <property type="term" value="F:DNA-binding transcription factor activity, RNA polymerase II-specific"/>
    <property type="evidence" value="ECO:0000250"/>
    <property type="project" value="UniProtKB"/>
</dbReference>
<dbReference type="GO" id="GO:0140693">
    <property type="term" value="F:molecular condensate scaffold activity"/>
    <property type="evidence" value="ECO:0000250"/>
    <property type="project" value="UniProtKB"/>
</dbReference>
<dbReference type="GO" id="GO:1990841">
    <property type="term" value="F:promoter-specific chromatin binding"/>
    <property type="evidence" value="ECO:0000250"/>
    <property type="project" value="UniProtKB"/>
</dbReference>
<dbReference type="GO" id="GO:0000978">
    <property type="term" value="F:RNA polymerase II cis-regulatory region sequence-specific DNA binding"/>
    <property type="evidence" value="ECO:0000250"/>
    <property type="project" value="UniProtKB"/>
</dbReference>
<dbReference type="GO" id="GO:0090398">
    <property type="term" value="P:cellular senescence"/>
    <property type="evidence" value="ECO:0000250"/>
    <property type="project" value="UniProtKB"/>
</dbReference>
<dbReference type="GO" id="GO:0048512">
    <property type="term" value="P:circadian behavior"/>
    <property type="evidence" value="ECO:0000250"/>
    <property type="project" value="UniProtKB"/>
</dbReference>
<dbReference type="GO" id="GO:0006974">
    <property type="term" value="P:DNA damage response"/>
    <property type="evidence" value="ECO:0000250"/>
    <property type="project" value="UniProtKB"/>
</dbReference>
<dbReference type="GO" id="GO:0043153">
    <property type="term" value="P:entrainment of circadian clock by photoperiod"/>
    <property type="evidence" value="ECO:0000250"/>
    <property type="project" value="UniProtKB"/>
</dbReference>
<dbReference type="GO" id="GO:0030308">
    <property type="term" value="P:negative regulation of cell growth"/>
    <property type="evidence" value="ECO:0000250"/>
    <property type="project" value="UniProtKB"/>
</dbReference>
<dbReference type="GO" id="GO:0045892">
    <property type="term" value="P:negative regulation of DNA-templated transcription"/>
    <property type="evidence" value="ECO:0000250"/>
    <property type="project" value="UniProtKB"/>
</dbReference>
<dbReference type="GO" id="GO:0006289">
    <property type="term" value="P:nucleotide-excision repair"/>
    <property type="evidence" value="ECO:0000250"/>
    <property type="project" value="UniProtKB"/>
</dbReference>
<dbReference type="GO" id="GO:0097252">
    <property type="term" value="P:oligodendrocyte apoptotic process"/>
    <property type="evidence" value="ECO:0000250"/>
    <property type="project" value="UniProtKB"/>
</dbReference>
<dbReference type="GO" id="GO:0043065">
    <property type="term" value="P:positive regulation of apoptotic process"/>
    <property type="evidence" value="ECO:0000250"/>
    <property type="project" value="UniProtKB"/>
</dbReference>
<dbReference type="GO" id="GO:2001244">
    <property type="term" value="P:positive regulation of intrinsic apoptotic signaling pathway"/>
    <property type="evidence" value="ECO:0000250"/>
    <property type="project" value="UniProtKB"/>
</dbReference>
<dbReference type="GO" id="GO:0045944">
    <property type="term" value="P:positive regulation of transcription by RNA polymerase II"/>
    <property type="evidence" value="ECO:0000250"/>
    <property type="project" value="UniProtKB"/>
</dbReference>
<dbReference type="GO" id="GO:0051262">
    <property type="term" value="P:protein tetramerization"/>
    <property type="evidence" value="ECO:0007669"/>
    <property type="project" value="InterPro"/>
</dbReference>
<dbReference type="CDD" id="cd08367">
    <property type="entry name" value="P53"/>
    <property type="match status" value="1"/>
</dbReference>
<dbReference type="FunFam" id="2.60.40.720:FF:000003">
    <property type="entry name" value="Cellular tumor antigen p53"/>
    <property type="match status" value="1"/>
</dbReference>
<dbReference type="FunFam" id="4.10.170.10:FF:000003">
    <property type="entry name" value="Cellular tumor antigen p53"/>
    <property type="match status" value="1"/>
</dbReference>
<dbReference type="Gene3D" id="2.60.40.720">
    <property type="match status" value="1"/>
</dbReference>
<dbReference type="Gene3D" id="6.10.50.20">
    <property type="match status" value="1"/>
</dbReference>
<dbReference type="Gene3D" id="4.10.170.10">
    <property type="entry name" value="p53-like tetramerisation domain"/>
    <property type="match status" value="1"/>
</dbReference>
<dbReference type="InterPro" id="IPR008967">
    <property type="entry name" value="p53-like_TF_DNA-bd_sf"/>
</dbReference>
<dbReference type="InterPro" id="IPR012346">
    <property type="entry name" value="p53/RUNT-type_TF_DNA-bd_sf"/>
</dbReference>
<dbReference type="InterPro" id="IPR011615">
    <property type="entry name" value="p53_DNA-bd"/>
</dbReference>
<dbReference type="InterPro" id="IPR036674">
    <property type="entry name" value="p53_tetramer_sf"/>
</dbReference>
<dbReference type="InterPro" id="IPR010991">
    <property type="entry name" value="p53_tetrameristn"/>
</dbReference>
<dbReference type="InterPro" id="IPR013872">
    <property type="entry name" value="p53_transactivation_domain"/>
</dbReference>
<dbReference type="InterPro" id="IPR002117">
    <property type="entry name" value="p53_tumour_suppressor"/>
</dbReference>
<dbReference type="PANTHER" id="PTHR11447">
    <property type="entry name" value="CELLULAR TUMOR ANTIGEN P53"/>
    <property type="match status" value="1"/>
</dbReference>
<dbReference type="PANTHER" id="PTHR11447:SF6">
    <property type="entry name" value="CELLULAR TUMOR ANTIGEN P53"/>
    <property type="match status" value="1"/>
</dbReference>
<dbReference type="Pfam" id="PF00870">
    <property type="entry name" value="P53"/>
    <property type="match status" value="1"/>
</dbReference>
<dbReference type="Pfam" id="PF08563">
    <property type="entry name" value="P53_TAD"/>
    <property type="match status" value="1"/>
</dbReference>
<dbReference type="Pfam" id="PF07710">
    <property type="entry name" value="P53_tetramer"/>
    <property type="match status" value="1"/>
</dbReference>
<dbReference type="PRINTS" id="PR00386">
    <property type="entry name" value="P53SUPPRESSR"/>
</dbReference>
<dbReference type="SUPFAM" id="SSF47719">
    <property type="entry name" value="p53 tetramerization domain"/>
    <property type="match status" value="1"/>
</dbReference>
<dbReference type="SUPFAM" id="SSF49417">
    <property type="entry name" value="p53-like transcription factors"/>
    <property type="match status" value="1"/>
</dbReference>
<dbReference type="PROSITE" id="PS00348">
    <property type="entry name" value="P53"/>
    <property type="match status" value="1"/>
</dbReference>
<organism>
    <name type="scientific">Cavia porcellus</name>
    <name type="common">Guinea pig</name>
    <dbReference type="NCBI Taxonomy" id="10141"/>
    <lineage>
        <taxon>Eukaryota</taxon>
        <taxon>Metazoa</taxon>
        <taxon>Chordata</taxon>
        <taxon>Craniata</taxon>
        <taxon>Vertebrata</taxon>
        <taxon>Euteleostomi</taxon>
        <taxon>Mammalia</taxon>
        <taxon>Eutheria</taxon>
        <taxon>Euarchontoglires</taxon>
        <taxon>Glires</taxon>
        <taxon>Rodentia</taxon>
        <taxon>Hystricomorpha</taxon>
        <taxon>Caviidae</taxon>
        <taxon>Cavia</taxon>
    </lineage>
</organism>
<gene>
    <name type="primary">TP53</name>
</gene>
<comment type="function">
    <text evidence="2 3">Multifunctional transcription factor that induces cell cycle arrest, DNA repair or apoptosis upon binding to its target DNA sequence. Acts as a tumor suppressor in many tumor types; induces growth arrest or apoptosis depending on the physiological circumstances and cell type. Negatively regulates cell division by controlling expression of a set of genes required for this process. One of the activated genes is an inhibitor of cyclin-dependent kinases. Apoptosis induction seems to be mediated either by stimulation of BAX and FAS antigen expression, or by repression of Bcl-2 expression. Its pro-apoptotic activity is activated via its interaction with PPP1R13B/ASPP1 or TP53BP2/ASPP2 (By similarity). However, this activity is inhibited when the interaction with PPP1R13B/ASPP1 or TP53BP2/ASPP2 is displaced by PPP1R13L/iASPP (By similarity). In cooperation with mitochondrial PPIF is involved in activating oxidative stress-induced necrosis; the function is largely independent of transcription. Prevents CDK7 kinase activity when associated to CAK complex in response to DNA damage, thus stopping cell cycle progression. Induces the transcription of long intergenic non-coding RNA p21 (lincRNA-p21) and lincRNA-Mkln1. LincRNA-p21 participates in TP53-dependent transcriptional repression leading to apoptosis and seems to have an effect on cell-cycle regulation. Regulates the circadian clock by repressing CLOCK-BMAL1-mediated transcriptional activation of PER2.</text>
</comment>
<comment type="cofactor">
    <cofactor evidence="1">
        <name>Zn(2+)</name>
        <dbReference type="ChEBI" id="CHEBI:29105"/>
    </cofactor>
    <text evidence="1">Binds 1 zinc ion per subunit.</text>
</comment>
<comment type="subunit">
    <text evidence="2 3 4">Forms homodimers and homotetramers (By similarity). Binds DNA as a homotetramer. Interacts with AXIN1. Probably part of a complex consisting of TP53, HIPK2 and AXIN1. Interacts with histone acetyltransferases EP300 and methyltransferases HRMT1L2 and CARM1, and recruits them to promoters. Interacts (via C-terminus) with TAF1; when TAF1 is part of the TFIID complex. Interacts with ING4; this interaction may be indirect. Found in a complex with CABLES1 and TP73. Interacts with HIPK1, HIPK2, and TP53INP1. Interacts with WWOX. Interacts with USP7 and SYVN1. Interacts with HSP90AB1. Interacts with CHD8; leading to recruit histone H1 and prevent transactivation activity. Interacts with ARMC10, BANP, CDKN2AIP, NUAK1, STK11/LKB1, UHRF2 and E4F1. Interacts with YWHAZ; the interaction enhances TP53 transcriptional activity. Phosphorylation of YWHAZ inhibits this interaction. Interacts (via DNA-binding domain) with MAML1 (via N-terminus). Interacts with MKRN1. Interacts with PML (via C-terminus). Interacts with MDM2; leading to ubiquitination and proteasomal degradation of TP53. Directly interacts with FBXO42; leading to ubiquitination and degradation of TP53. Interacts (phosphorylated at Ser-15 by ATM) with the phosphatase PP2A-PPP2R5C holoenzyme; regulates stress-induced TP53-dependent inhibition of cell proliferation. Interacts with PPP2R2A. Interacts with AURKA, DAXX, BRD7 and TRIM24. Interacts (when monomethylated at Lys-380) with L3MBTL1. Interacts with GRK5. Binds to the CAK complex (CDK7, cyclin H and MAT1) in response to DNA damage. Interacts with CDK5 in neurons. Interacts with AURKB, SETD2, UHRF2 and NOC2L. Interacts (via N-terminus) with PTK2/FAK1; this promotes ubiquitination by MDM2. Interacts with PTK2B/PYK2; this promotes ubiquitination by MDM2. Interacts with PRKCG. Interacts with PPIF; the association implicates preferentially tetrameric TP53, is induced by oxidative stress and is impaired by cyclosporin A (CsA). Interacts with SNAI1; the interaction induces SNAI1 degradation via MDM2-mediated ubiquitination and inhibits SNAI1-induced cell invasion. Interacts with UBC9. Interacts with ZNF385B; the interaction is direct. Interacts (via DNA-binding domain) with ZNF385A; the interaction is direct and enhances p53/TP53 transactivation functions on cell-cycle arrest target genes, resulting in growth arrest. Interacts with ANKRD2. Interacts with RFFL and RNF34; involved in p53/TP53 ubiquitination. Interacts with MTA1 and COP1. Interacts with CCAR2 (via N-terminus). Interacts with MORC3. Interacts (via C-terminus) with POU4F2 (via C-terminus). Interacts (via oligomerization region) with NOP53; the interaction is direct and may prevent the MDM2-mediated proteasomal degradation of TP53. Interacts with AFG1L; mediates mitochondrial translocation of TP53. Interacts with UBD. Interacts with TAF6. Interacts with C10orf90/FATS; the interaction inhibits binding of TP53 and MDM2 (By similarity). Interacts with NUPR1; interaction is stress-dependent. Forms a complex with EP300 and NUPR1; this complex binds CDKN1A promoter leading to transcriptional induction of CDKN1A (By similarity). Interacts with PRMT5 in response to DNA damage; the interaction is TTC5/STRAP dependent (By similarity). Interacts with PPP1R13L (via SH3 domain and ANK repeats); the interaction inhibits pro-apoptotic activity of p53/TP53 (By similarity). Interacts with PPP1R13B/ASPP1 and TP53BP2/ASPP2; the interactions promotes pro-apoptotic activity (By similarity). When phosphorylated at Ser-15, interacts with DDX3X and gamma-tubulin (By similarity). Interacts with KAT7/HBO1; leading to inhibit histone acetyltransferase activity of KAT7/HBO1 (By similarity). Interacts (via N-terminus) with E3 ubiquitin-protein ligase MUL1; the interaction results in ubiquitination of cytoplasmic TP53 at Lys-24 and subsequent proteasomal degradation (By similarity). Interacts with S100A4; this interaction promotes TP53 degradation (By similarity). Interacts with TTC5/STRAP; the interaction may result in increased mitochondrial-dependent apoptosis (By similarity). Interacts with NQO1; this interaction is NADH-dependent, stabilizes TP53 in response to oxidative stress and protects it from ubiquitin-independent degradation by the 20S proteasome (By similarity). Interacts with DAZAP2 at TP53 target gene promoters; the interaction is triggered by DNA damage and leads to modulation of the expression of a subset of TP53 target genes, reducing DNA damage-induced cell death by limiting the expression of cell death-mediating TP53 target genes (By similarity). Interacts (via N-terminus) with ZNF768 (via zinc-finger domains); interaction might be facilitated by TP53 oligomerization state (By similarity). Forms a ternary complex with ALDOB and G6PD; this interaction is direct. ALDOB stabilizes the complex inhibiting G6PD activity and keeping oxidative pentose phosphate metabolism in check. Interacts with MORN3; the interactions mediate post-transcriptional modifications of TP53 by MDM2 and SIRT1 (By similarity). Interacts with HSPA9/MOT-2; the interaction promotes the degradation of TP53 (By similarity). Interacts with FBXO22; this interaction promotes TP53 proteasomal degradation (By similarity).</text>
</comment>
<comment type="subcellular location">
    <subcellularLocation>
        <location evidence="3">Cytoplasm</location>
    </subcellularLocation>
    <subcellularLocation>
        <location evidence="3">Nucleus</location>
    </subcellularLocation>
    <subcellularLocation>
        <location evidence="3">Nucleus</location>
        <location evidence="3">PML body</location>
    </subcellularLocation>
    <subcellularLocation>
        <location evidence="3">Endoplasmic reticulum</location>
    </subcellularLocation>
    <subcellularLocation>
        <location evidence="3">Mitochondrion matrix</location>
    </subcellularLocation>
    <subcellularLocation>
        <location evidence="3">Cytoplasm</location>
        <location evidence="3">Cytoskeleton</location>
        <location evidence="3">Microtubule organizing center</location>
        <location evidence="3">Centrosome</location>
    </subcellularLocation>
    <text evidence="3">Interaction with BANP promotes nuclear localization. Recruited into PML bodies together with CHEK2. Translocates to mitochondria upon oxidative stress. Translocates to mitochondria in response to mitomycin C treatment (By similarity). Competitive inhibition of TP53 interaction with HSPA9/MOT-2 by UBXN2A results in increased protein abundance and subsequent translocation of TP53 to the nucleus (By similarity).</text>
</comment>
<comment type="domain">
    <text evidence="3">The N-terminal and C-terminal disordered regions undergo liquid-liquid phase separation (LLPS) following homotetramerization and activation. Post-translational modifications, such as phosphorylation or lactylation affect the ability to undergo LLPS.</text>
</comment>
<comment type="domain">
    <text evidence="3">The nuclear export signal acts as a transcriptional repression domain. The TADI and TADII motifs (residues 17 to 25 and 48 to 56) correspond both to 9aaTAD motifs which are transactivation domains present in a large number of yeast and animal transcription factors.</text>
</comment>
<comment type="PTM">
    <text evidence="1 3">Phosphorylation on Ser residues mediates transcriptional activation. Phosphorylation at Ser-9 by HIPK4 increases repression activity on BIRC5 promoter (By similarity). Phosphorylated on Thr-18 by VRK1, which may prevent the interaction with MDM2. Phosphorylated on Ser-20 by CHEK2 in response to DNA damage, which prevents ubiquitination by MDM2. Phosphorylated on Ser-20 by PLK3 in response to reactive oxygen species (ROS), promoting p53/TP53-mediated apoptosis. Phosphorylated on Ser-33 by CDK7 in a CAK complex in response to DNA damage. Phosphorylated by HIPK1. Phosphorylated on Ser-46 by HIPK2 upon UV irradiation. Phosphorylation on Ser-46 is required for acetylation by CREBBP. Phosphorylated on Ser-390 following UV but not gamma irradiation. Stabilized by CDK5-mediated phosphorylation in response to genotoxic and oxidative stresses at Ser-15, Ser-33 and Ser-46, leading to accumulation of p53/TP53, particularly in the nucleus, thus inducing the transactivation of p53/TP53 target genes. Phosphorylated by DYRK2 at Ser-46 in response to genotoxic stress. Phosphorylated at Ser-313 and Ser-390 by CDK2 in response to DNA-damage (By similarity). Phosphorylation at Ser-15 is required for interaction with DDX3X and gamma-tubulin (By similarity). Phosphorylation at Ser-390 regulates its ability to undergo liquid-liquid phase separation by increasing fluidity of TP53/p53 condensates (By similarity).</text>
</comment>
<comment type="PTM">
    <text evidence="2 3">Ubiquitinated by MDM2 and SYVN1, which leads to proteasomal degradation. Ubiquitinated by RFWD3, which works in cooperation with MDM2 and may catalyze the formation of short polyubiquitin chains on p53/TP53 that are not targeted to the proteasome. Ubiquitinated by MKRN1 at Lys-289 and Lys-290, which leads to proteasomal degradation. Deubiquitinated by USP10, leading to stabilize it. Ubiquitinated by TRIM24, RFFL, RNF34 and RNF125, which leads to proteasomal degradation. Ubiquitination by TOPORS induces degradation. Deubiquitination by USP7, leading to stabilize it. Ubiquitinated by COP1, which leads to proteasomal degradation (By similarity). Ubiquitination and subsequent proteasomal degradation is negatively regulated by CCAR2 (By similarity). Polyubiquitinated by C10orf90/FATS, polyubiquitination is 'Lys-48'-linkage independent and non-proteolytic, leading to TP53 stabilization (By similarity). Deubiquitinated by USP3, leading to stabilization (By similarity). Ubiquitinated by MSL2, promoting its cytoplasmic localization (By similarity). Also ubiquitinated by the SCF(FBXO22)-KDMA4A complex; leading to proteasomal degradation (By similarity).</text>
</comment>
<comment type="PTM">
    <text evidence="3">Monomethylated at Lys-370 by SETD7, leading to stabilization and increased transcriptional activation. Monomethylated at Lys-368 by SMYD2, leading to decreased DNA-binding activity and subsequent transcriptional regulation activity. Lys-370 monomethylation prevents interaction with SMYD2 and subsequent monomethylation at Lys-368. Dimethylated at Lys-371 by EHMT1 and EHMT2. Monomethylated at Lys-380 by KMT5A, promoting interaction with L3MBTL1 and leading to repress transcriptional activity. Demethylation of dimethylated Lys-368 by KDM1A prevents interaction with TP53BP1 and represses TP53-mediated transcriptional activation (By similarity). Monomethylated at Arg-331 and dimethylated at Arg-333 by PRMT5; methylation is increased after DNA damage and might possibly affect TP53 target gene specificity (By similarity). Polyubiquitinated by MUL1 at Lys-24 which leads to proteasomal degradation (By similarity).</text>
</comment>
<comment type="PTM">
    <text evidence="1">Sumoylated with SUMO1. Sumoylated at Lys-384 by UBC9 (By similarity).</text>
</comment>
<comment type="PTM">
    <text evidence="3">Acetylation of Lys-380 by CREBBP enhances transcriptional activity. Acetylation of Lys-380 by EP300. Deacetylation of Lys-380 by SIRT1 impairs its ability to induce proapoptotic program and modulate cell senescence. Deacetylation by SIRT2 impairs its ability to induce transcription activation in a AKT-dependent manner. Acetylation at Lys-379 increases stability. Deacetylation at Lys-379 by SIRT6 decreases its stability, thereby regulating cell senescence. Acetylated at Lys-118 by KAT5, KAT6A and KAT8; regulating its ability to induce proapoptotic program.</text>
</comment>
<comment type="PTM">
    <text evidence="3">Lactylation by AARS1 prevents ability to undergo liquid-liquid phase separation (LLPS), thereby inhibiting transcription factor activity.</text>
</comment>
<comment type="disease">
    <text>p53 is found in increased amounts in a wide variety of transformed cells. p53 is frequently mutated or inactivated in many types of cancer.</text>
</comment>
<comment type="similarity">
    <text evidence="6">Belongs to the p53 family.</text>
</comment>
<protein>
    <recommendedName>
        <fullName>Cellular tumor antigen p53</fullName>
    </recommendedName>
    <alternativeName>
        <fullName>Tumor suppressor p53</fullName>
    </alternativeName>
</protein>
<sequence length="391" mass="43288">MEEPHSDLSIEPPLSQETFSDLWKLLPENNVLSDSLSPPMDHLLLSPEEVASWLGENPDGDGHVSAAPVSEAPTSAGPALVAPAPATSWPLSSSVPSHKPYRGSYGFEVHFLKSGTAKSVTCTYSPGLNKLFCQLAKTCPVQVWVESPPPPGTRVRALAIYKKSQHMTEVVRRCPHHERCSDSDGLAPPQHLIRVEGNLHAEYVDDRTTFRHSVVVPYEPPEVGSDCTTIHYNYMCNSSCMGGMNRRPILTIITLEDSSGKLLGRDSFEVRVCACPGRDRRTEEENFRKKGGLCPEPTPGNIKRALPTSTSSSPQPKKKPLDAEYFTLKIRGRKNFEILREINEALEFKDAQTEKEPGESRPHSSYPKSKKGQSTSCHKKLMFKREGLDSD</sequence>
<proteinExistence type="evidence at transcript level"/>
<keyword id="KW-0007">Acetylation</keyword>
<keyword id="KW-0010">Activator</keyword>
<keyword id="KW-0053">Apoptosis</keyword>
<keyword id="KW-0090">Biological rhythms</keyword>
<keyword id="KW-0131">Cell cycle</keyword>
<keyword id="KW-0963">Cytoplasm</keyword>
<keyword id="KW-0206">Cytoskeleton</keyword>
<keyword id="KW-0238">DNA-binding</keyword>
<keyword id="KW-0256">Endoplasmic reticulum</keyword>
<keyword id="KW-1017">Isopeptide bond</keyword>
<keyword id="KW-0479">Metal-binding</keyword>
<keyword id="KW-0488">Methylation</keyword>
<keyword id="KW-0496">Mitochondrion</keyword>
<keyword id="KW-1210">Necrosis</keyword>
<keyword id="KW-0539">Nucleus</keyword>
<keyword id="KW-0597">Phosphoprotein</keyword>
<keyword id="KW-1185">Reference proteome</keyword>
<keyword id="KW-0678">Repressor</keyword>
<keyword id="KW-0804">Transcription</keyword>
<keyword id="KW-0805">Transcription regulation</keyword>
<keyword id="KW-0043">Tumor suppressor</keyword>
<keyword id="KW-0832">Ubl conjugation</keyword>
<keyword id="KW-0862">Zinc</keyword>
<name>P53_CAVPO</name>
<accession>Q9WUR6</accession>
<feature type="chain" id="PRO_0000185696" description="Cellular tumor antigen p53">
    <location>
        <begin position="1"/>
        <end position="391"/>
    </location>
</feature>
<feature type="DNA-binding region" evidence="3">
    <location>
        <begin position="100"/>
        <end position="290"/>
    </location>
</feature>
<feature type="region of interest" description="Interaction with CCAR2" evidence="3">
    <location>
        <begin position="1"/>
        <end position="318"/>
    </location>
</feature>
<feature type="region of interest" description="Transcription activation (acidic)">
    <location>
        <begin position="1"/>
        <end position="44"/>
    </location>
</feature>
<feature type="region of interest" description="Disordered" evidence="5">
    <location>
        <begin position="53"/>
        <end position="78"/>
    </location>
</feature>
<feature type="region of interest" description="Interaction with WWOX" evidence="1">
    <location>
        <begin position="64"/>
        <end position="108"/>
    </location>
</feature>
<feature type="region of interest" description="Interaction with HIPK1" evidence="1">
    <location>
        <begin position="98"/>
        <end position="368"/>
    </location>
</feature>
<feature type="region of interest" description="Required for interaction with ZNF385A" evidence="1">
    <location>
        <begin position="98"/>
        <end position="298"/>
    </location>
</feature>
<feature type="region of interest" description="Required for interaction with FBXO42" evidence="1">
    <location>
        <begin position="111"/>
        <end position="234"/>
    </location>
</feature>
<feature type="region of interest" description="Interaction with AXIN1" evidence="1">
    <location>
        <begin position="114"/>
        <end position="290"/>
    </location>
</feature>
<feature type="region of interest" description="Interaction with E4F1" evidence="1">
    <location>
        <begin position="254"/>
        <end position="292"/>
    </location>
</feature>
<feature type="region of interest" description="Interaction with DNA" evidence="1">
    <location>
        <begin position="271"/>
        <end position="278"/>
    </location>
</feature>
<feature type="region of interest" description="Disordered" evidence="5">
    <location>
        <begin position="284"/>
        <end position="320"/>
    </location>
</feature>
<feature type="region of interest" description="Interaction with HIPK2" evidence="1">
    <location>
        <begin position="317"/>
        <end position="358"/>
    </location>
</feature>
<feature type="region of interest" description="Oligomerization">
    <location>
        <begin position="323"/>
        <end position="354"/>
    </location>
</feature>
<feature type="region of interest" description="Disordered" evidence="5">
    <location>
        <begin position="347"/>
        <end position="391"/>
    </location>
</feature>
<feature type="region of interest" description="Interaction with USP7" evidence="1">
    <location>
        <begin position="357"/>
        <end position="361"/>
    </location>
</feature>
<feature type="region of interest" description="Basic (repression of DNA-binding)">
    <location>
        <begin position="366"/>
        <end position="385"/>
    </location>
</feature>
<feature type="short sequence motif" description="Bipartite nuclear localization signal" evidence="1">
    <location>
        <begin position="303"/>
        <end position="319"/>
    </location>
</feature>
<feature type="short sequence motif" description="Nuclear export signal" evidence="1">
    <location>
        <begin position="337"/>
        <end position="348"/>
    </location>
</feature>
<feature type="short sequence motif" description="[KR]-[STA]-K motif">
    <location>
        <begin position="368"/>
        <end position="370"/>
    </location>
</feature>
<feature type="compositionally biased region" description="Basic and acidic residues" evidence="5">
    <location>
        <begin position="347"/>
        <end position="362"/>
    </location>
</feature>
<feature type="binding site" evidence="3">
    <location>
        <position position="174"/>
    </location>
    <ligand>
        <name>Zn(2+)</name>
        <dbReference type="ChEBI" id="CHEBI:29105"/>
    </ligand>
</feature>
<feature type="binding site" evidence="3">
    <location>
        <position position="177"/>
    </location>
    <ligand>
        <name>Zn(2+)</name>
        <dbReference type="ChEBI" id="CHEBI:29105"/>
    </ligand>
</feature>
<feature type="binding site" evidence="3">
    <location>
        <position position="236"/>
    </location>
    <ligand>
        <name>Zn(2+)</name>
        <dbReference type="ChEBI" id="CHEBI:29105"/>
    </ligand>
</feature>
<feature type="binding site" evidence="3">
    <location>
        <position position="240"/>
    </location>
    <ligand>
        <name>Zn(2+)</name>
        <dbReference type="ChEBI" id="CHEBI:29105"/>
    </ligand>
</feature>
<feature type="site" description="Interaction with DNA" evidence="3">
    <location>
        <position position="118"/>
    </location>
</feature>
<feature type="modified residue" description="Phosphoserine; by HIPK4" evidence="3">
    <location>
        <position position="9"/>
    </location>
</feature>
<feature type="modified residue" description="Phosphoserine; by CDK5, PRPK, AMPK, NUAK1 and ATM" evidence="3">
    <location>
        <position position="15"/>
    </location>
</feature>
<feature type="modified residue" description="Phosphothreonine; by CK1, VRK1 and VRK2" evidence="3">
    <location>
        <position position="18"/>
    </location>
</feature>
<feature type="modified residue" description="Phosphoserine; by CHEK2, CK1 and PLK3" evidence="3">
    <location>
        <position position="20"/>
    </location>
</feature>
<feature type="modified residue" description="Phosphoserine; by CDK5 and CDK7" evidence="3">
    <location>
        <position position="33"/>
    </location>
</feature>
<feature type="modified residue" description="Phosphoserine; by MAPKAPK5" evidence="3">
    <location>
        <position position="37"/>
    </location>
</feature>
<feature type="modified residue" description="Phosphoserine; by CDK5, DYRK2, HIPK2 and PKC/PRKCG" evidence="3">
    <location>
        <position position="46"/>
    </location>
</feature>
<feature type="modified residue" description="N6-acetyllysine" evidence="3">
    <location>
        <position position="118"/>
    </location>
</feature>
<feature type="modified residue" description="N6-lactoyllysine" evidence="3">
    <location>
        <position position="118"/>
    </location>
</feature>
<feature type="modified residue" description="N6-lactoyllysine" evidence="3">
    <location>
        <position position="137"/>
    </location>
</feature>
<feature type="modified residue" description="Phosphoserine; by AURKB" evidence="3">
    <location>
        <position position="181"/>
    </location>
</feature>
<feature type="modified residue" description="Phosphoserine; by AURKB" evidence="3">
    <location>
        <position position="267"/>
    </location>
</feature>
<feature type="modified residue" description="Phosphothreonine; by AURKB" evidence="3">
    <location>
        <position position="282"/>
    </location>
</feature>
<feature type="modified residue" description="N6-acetyllysine" evidence="3">
    <location>
        <position position="303"/>
    </location>
</feature>
<feature type="modified residue" description="Phosphoserine; by AURKA, CDK1 and CDK2" evidence="3">
    <location>
        <position position="313"/>
    </location>
</feature>
<feature type="modified residue" description="N6-acetyllysine" evidence="2">
    <location>
        <position position="319"/>
    </location>
</feature>
<feature type="modified residue" description="Omega-N-methylarginine" evidence="3">
    <location>
        <position position="331"/>
    </location>
</feature>
<feature type="modified residue" description="Symmetric dimethylarginine" evidence="3">
    <location>
        <position position="333"/>
    </location>
</feature>
<feature type="modified residue" description="N6,N6-dimethyllysine; alternate" evidence="3">
    <location>
        <position position="368"/>
    </location>
</feature>
<feature type="modified residue" description="N6-methyllysine; by SMYD2; alternate" evidence="3">
    <location>
        <position position="368"/>
    </location>
</feature>
<feature type="modified residue" description="N6-methyllysine; by SETD7" evidence="3">
    <location>
        <position position="370"/>
    </location>
</feature>
<feature type="modified residue" description="N6,N6-dimethyllysine; by EHMT1 and EHMT2; alternate" evidence="3">
    <location>
        <position position="371"/>
    </location>
</feature>
<feature type="modified residue" description="N6-acetyllysine; alternate" evidence="3">
    <location>
        <position position="371"/>
    </location>
</feature>
<feature type="modified residue" description="N6-acetyllysine" evidence="3">
    <location>
        <position position="379"/>
    </location>
</feature>
<feature type="modified residue" description="N6,N6-dimethyllysine; alternate" evidence="3">
    <location>
        <position position="380"/>
    </location>
</feature>
<feature type="modified residue" description="N6-acetyllysine; alternate" evidence="3">
    <location>
        <position position="380"/>
    </location>
</feature>
<feature type="modified residue" description="N6-methyllysine; by KMT5A; alternate" evidence="3">
    <location>
        <position position="380"/>
    </location>
</feature>
<feature type="modified residue" description="Phosphoserine; by CK2, CDK2 and NUAK1" evidence="3">
    <location>
        <position position="390"/>
    </location>
</feature>
<feature type="cross-link" description="Glycyl lysine isopeptide (Lys-Gly) (interchain with G-Cter in ubiquitin)" evidence="3">
    <location>
        <position position="24"/>
    </location>
</feature>
<feature type="cross-link" description="Glycyl lysine isopeptide (Lys-Gly) (interchain with G-Cter in ubiquitin)" evidence="3">
    <location>
        <position position="289"/>
    </location>
</feature>
<feature type="cross-link" description="Glycyl lysine isopeptide (Lys-Gly) (interchain with G-Cter in ubiquitin)" evidence="3">
    <location>
        <position position="290"/>
    </location>
</feature>
<feature type="cross-link" description="Glycyl lysine isopeptide (Lys-Gly) (interchain with G-Cter in ubiquitin)" evidence="3">
    <location>
        <position position="349"/>
    </location>
</feature>
<feature type="cross-link" description="Glycyl lysine isopeptide (Lys-Gly) (interchain with G-Cter in ubiquitin)" evidence="3">
    <location>
        <position position="355"/>
    </location>
</feature>
<feature type="cross-link" description="Glycyl lysine isopeptide (Lys-Gly) (interchain with G-Cter in SUMO)" evidence="1">
    <location>
        <position position="384"/>
    </location>
</feature>
<evidence type="ECO:0000250" key="1"/>
<evidence type="ECO:0000250" key="2">
    <source>
        <dbReference type="UniProtKB" id="P02340"/>
    </source>
</evidence>
<evidence type="ECO:0000250" key="3">
    <source>
        <dbReference type="UniProtKB" id="P04637"/>
    </source>
</evidence>
<evidence type="ECO:0000250" key="4">
    <source>
        <dbReference type="UniProtKB" id="P10361"/>
    </source>
</evidence>
<evidence type="ECO:0000256" key="5">
    <source>
        <dbReference type="SAM" id="MobiDB-lite"/>
    </source>
</evidence>
<evidence type="ECO:0000305" key="6"/>
<reference key="1">
    <citation type="journal article" date="1999" name="Genomics">
        <title>Guinea pig p53 mRNA: identification of new elements in coding and untranslated regions and their functional and evolutionary implications.</title>
        <authorList>
            <person name="D'erchia A.M."/>
            <person name="Pesole G."/>
            <person name="Tullo A."/>
            <person name="Saccone C."/>
            <person name="Sbisa E."/>
        </authorList>
    </citation>
    <scope>NUCLEOTIDE SEQUENCE [MRNA]</scope>
    <source>
        <tissue>Spleen</tissue>
    </source>
</reference>